<gene>
    <name evidence="1" type="primary">guaA</name>
    <name type="ordered locus">Swol_1784</name>
</gene>
<accession>Q0AW22</accession>
<name>GUAA_SYNWW</name>
<keyword id="KW-0067">ATP-binding</keyword>
<keyword id="KW-0315">Glutamine amidotransferase</keyword>
<keyword id="KW-0332">GMP biosynthesis</keyword>
<keyword id="KW-0436">Ligase</keyword>
<keyword id="KW-0547">Nucleotide-binding</keyword>
<keyword id="KW-0658">Purine biosynthesis</keyword>
<keyword id="KW-1185">Reference proteome</keyword>
<proteinExistence type="inferred from homology"/>
<reference key="1">
    <citation type="journal article" date="2010" name="Environ. Microbiol.">
        <title>The genome of Syntrophomonas wolfei: new insights into syntrophic metabolism and biohydrogen production.</title>
        <authorList>
            <person name="Sieber J.R."/>
            <person name="Sims D.R."/>
            <person name="Han C."/>
            <person name="Kim E."/>
            <person name="Lykidis A."/>
            <person name="Lapidus A.L."/>
            <person name="McDonnald E."/>
            <person name="Rohlin L."/>
            <person name="Culley D.E."/>
            <person name="Gunsalus R."/>
            <person name="McInerney M.J."/>
        </authorList>
    </citation>
    <scope>NUCLEOTIDE SEQUENCE [LARGE SCALE GENOMIC DNA]</scope>
    <source>
        <strain>DSM 2245B / Goettingen</strain>
    </source>
</reference>
<evidence type="ECO:0000255" key="1">
    <source>
        <dbReference type="HAMAP-Rule" id="MF_00344"/>
    </source>
</evidence>
<dbReference type="EC" id="6.3.5.2" evidence="1"/>
<dbReference type="EMBL" id="CP000448">
    <property type="protein sequence ID" value="ABI69082.1"/>
    <property type="molecule type" value="Genomic_DNA"/>
</dbReference>
<dbReference type="RefSeq" id="WP_011641177.1">
    <property type="nucleotide sequence ID" value="NC_008346.1"/>
</dbReference>
<dbReference type="SMR" id="Q0AW22"/>
<dbReference type="STRING" id="335541.Swol_1784"/>
<dbReference type="KEGG" id="swo:Swol_1784"/>
<dbReference type="eggNOG" id="COG0518">
    <property type="taxonomic scope" value="Bacteria"/>
</dbReference>
<dbReference type="eggNOG" id="COG0519">
    <property type="taxonomic scope" value="Bacteria"/>
</dbReference>
<dbReference type="HOGENOM" id="CLU_014340_0_5_9"/>
<dbReference type="OrthoDB" id="9802219at2"/>
<dbReference type="UniPathway" id="UPA00189">
    <property type="reaction ID" value="UER00296"/>
</dbReference>
<dbReference type="Proteomes" id="UP000001968">
    <property type="component" value="Chromosome"/>
</dbReference>
<dbReference type="GO" id="GO:0005829">
    <property type="term" value="C:cytosol"/>
    <property type="evidence" value="ECO:0007669"/>
    <property type="project" value="TreeGrafter"/>
</dbReference>
<dbReference type="GO" id="GO:0005524">
    <property type="term" value="F:ATP binding"/>
    <property type="evidence" value="ECO:0007669"/>
    <property type="project" value="UniProtKB-UniRule"/>
</dbReference>
<dbReference type="GO" id="GO:0003921">
    <property type="term" value="F:GMP synthase activity"/>
    <property type="evidence" value="ECO:0007669"/>
    <property type="project" value="InterPro"/>
</dbReference>
<dbReference type="CDD" id="cd01742">
    <property type="entry name" value="GATase1_GMP_Synthase"/>
    <property type="match status" value="1"/>
</dbReference>
<dbReference type="CDD" id="cd01997">
    <property type="entry name" value="GMP_synthase_C"/>
    <property type="match status" value="1"/>
</dbReference>
<dbReference type="FunFam" id="3.30.300.10:FF:000002">
    <property type="entry name" value="GMP synthase [glutamine-hydrolyzing]"/>
    <property type="match status" value="1"/>
</dbReference>
<dbReference type="FunFam" id="3.40.50.620:FF:000001">
    <property type="entry name" value="GMP synthase [glutamine-hydrolyzing]"/>
    <property type="match status" value="1"/>
</dbReference>
<dbReference type="FunFam" id="3.40.50.880:FF:000001">
    <property type="entry name" value="GMP synthase [glutamine-hydrolyzing]"/>
    <property type="match status" value="1"/>
</dbReference>
<dbReference type="Gene3D" id="3.30.300.10">
    <property type="match status" value="1"/>
</dbReference>
<dbReference type="Gene3D" id="3.40.50.880">
    <property type="match status" value="1"/>
</dbReference>
<dbReference type="Gene3D" id="3.40.50.620">
    <property type="entry name" value="HUPs"/>
    <property type="match status" value="1"/>
</dbReference>
<dbReference type="HAMAP" id="MF_00344">
    <property type="entry name" value="GMP_synthase"/>
    <property type="match status" value="1"/>
</dbReference>
<dbReference type="InterPro" id="IPR029062">
    <property type="entry name" value="Class_I_gatase-like"/>
</dbReference>
<dbReference type="InterPro" id="IPR017926">
    <property type="entry name" value="GATASE"/>
</dbReference>
<dbReference type="InterPro" id="IPR001674">
    <property type="entry name" value="GMP_synth_C"/>
</dbReference>
<dbReference type="InterPro" id="IPR004739">
    <property type="entry name" value="GMP_synth_GATase"/>
</dbReference>
<dbReference type="InterPro" id="IPR022955">
    <property type="entry name" value="GMP_synthase"/>
</dbReference>
<dbReference type="InterPro" id="IPR025777">
    <property type="entry name" value="GMPS_ATP_PPase_dom"/>
</dbReference>
<dbReference type="InterPro" id="IPR022310">
    <property type="entry name" value="NAD/GMP_synthase"/>
</dbReference>
<dbReference type="InterPro" id="IPR014729">
    <property type="entry name" value="Rossmann-like_a/b/a_fold"/>
</dbReference>
<dbReference type="NCBIfam" id="TIGR00884">
    <property type="entry name" value="guaA_Cterm"/>
    <property type="match status" value="1"/>
</dbReference>
<dbReference type="NCBIfam" id="TIGR00888">
    <property type="entry name" value="guaA_Nterm"/>
    <property type="match status" value="1"/>
</dbReference>
<dbReference type="NCBIfam" id="NF000848">
    <property type="entry name" value="PRK00074.1"/>
    <property type="match status" value="1"/>
</dbReference>
<dbReference type="PANTHER" id="PTHR11922:SF2">
    <property type="entry name" value="GMP SYNTHASE [GLUTAMINE-HYDROLYZING]"/>
    <property type="match status" value="1"/>
</dbReference>
<dbReference type="PANTHER" id="PTHR11922">
    <property type="entry name" value="GMP SYNTHASE-RELATED"/>
    <property type="match status" value="1"/>
</dbReference>
<dbReference type="Pfam" id="PF00117">
    <property type="entry name" value="GATase"/>
    <property type="match status" value="1"/>
</dbReference>
<dbReference type="Pfam" id="PF00958">
    <property type="entry name" value="GMP_synt_C"/>
    <property type="match status" value="1"/>
</dbReference>
<dbReference type="Pfam" id="PF02540">
    <property type="entry name" value="NAD_synthase"/>
    <property type="match status" value="1"/>
</dbReference>
<dbReference type="PRINTS" id="PR00096">
    <property type="entry name" value="GATASE"/>
</dbReference>
<dbReference type="SUPFAM" id="SSF52402">
    <property type="entry name" value="Adenine nucleotide alpha hydrolases-like"/>
    <property type="match status" value="1"/>
</dbReference>
<dbReference type="SUPFAM" id="SSF52317">
    <property type="entry name" value="Class I glutamine amidotransferase-like"/>
    <property type="match status" value="1"/>
</dbReference>
<dbReference type="SUPFAM" id="SSF54810">
    <property type="entry name" value="GMP synthetase C-terminal dimerisation domain"/>
    <property type="match status" value="1"/>
</dbReference>
<dbReference type="PROSITE" id="PS51273">
    <property type="entry name" value="GATASE_TYPE_1"/>
    <property type="match status" value="1"/>
</dbReference>
<dbReference type="PROSITE" id="PS51553">
    <property type="entry name" value="GMPS_ATP_PPASE"/>
    <property type="match status" value="1"/>
</dbReference>
<sequence>MNKETVVVLDFGGQYNQLIARRVRELSVYSEMLPYDTSYEEIVAKKPQAIILTGSPASVHGGEAPGCDPRVFSLGIPVLGICYGMQLMAEQMGGKVQPSSLREYGRAVLQLTGKDEIFKGLPDEMQVWMSHGDTIISLPEGFRITASTANCPVAAISCPQRRLYGVQFHPEVRHSTYGMDIIRNFLFEICGLRGDWDLSDFISEAIEEIKNKVGKKRVLCALSGGVDSSVAATLVHQAVGEQLVCVFVDNGLLRKGEASQVIDTFAKEMKMNLVFVDARERFLAKLAGITEPERKRKIIGEEFIRIFEEEKAKLGEIDYLVQGTIYPDIVESGTSTAQTIKSHHNVGGLPEDMDFQLIEPLRLLFKDEVRLVGEKLGIPAEILWRQPFPGPGLGVRVLEEVSFEKLEILREADAIVRDEIKKAGLEREIWQAFAVLPPVRSVGVMGDARTYAYPIIIRAVISEDAMTAEVARLPWELLDIMARRIVNEVAGVNRVAYDITSKPPGTIEWE</sequence>
<comment type="function">
    <text evidence="1">Catalyzes the synthesis of GMP from XMP.</text>
</comment>
<comment type="catalytic activity">
    <reaction evidence="1">
        <text>XMP + L-glutamine + ATP + H2O = GMP + L-glutamate + AMP + diphosphate + 2 H(+)</text>
        <dbReference type="Rhea" id="RHEA:11680"/>
        <dbReference type="ChEBI" id="CHEBI:15377"/>
        <dbReference type="ChEBI" id="CHEBI:15378"/>
        <dbReference type="ChEBI" id="CHEBI:29985"/>
        <dbReference type="ChEBI" id="CHEBI:30616"/>
        <dbReference type="ChEBI" id="CHEBI:33019"/>
        <dbReference type="ChEBI" id="CHEBI:57464"/>
        <dbReference type="ChEBI" id="CHEBI:58115"/>
        <dbReference type="ChEBI" id="CHEBI:58359"/>
        <dbReference type="ChEBI" id="CHEBI:456215"/>
        <dbReference type="EC" id="6.3.5.2"/>
    </reaction>
</comment>
<comment type="pathway">
    <text evidence="1">Purine metabolism; GMP biosynthesis; GMP from XMP (L-Gln route): step 1/1.</text>
</comment>
<comment type="subunit">
    <text evidence="1">Homodimer.</text>
</comment>
<feature type="chain" id="PRO_1000120443" description="GMP synthase [glutamine-hydrolyzing]">
    <location>
        <begin position="1"/>
        <end position="510"/>
    </location>
</feature>
<feature type="domain" description="Glutamine amidotransferase type-1" evidence="1">
    <location>
        <begin position="5"/>
        <end position="195"/>
    </location>
</feature>
<feature type="domain" description="GMPS ATP-PPase" evidence="1">
    <location>
        <begin position="196"/>
        <end position="385"/>
    </location>
</feature>
<feature type="active site" description="Nucleophile" evidence="1">
    <location>
        <position position="82"/>
    </location>
</feature>
<feature type="active site" evidence="1">
    <location>
        <position position="169"/>
    </location>
</feature>
<feature type="active site" evidence="1">
    <location>
        <position position="171"/>
    </location>
</feature>
<feature type="binding site" evidence="1">
    <location>
        <begin position="223"/>
        <end position="229"/>
    </location>
    <ligand>
        <name>ATP</name>
        <dbReference type="ChEBI" id="CHEBI:30616"/>
    </ligand>
</feature>
<organism>
    <name type="scientific">Syntrophomonas wolfei subsp. wolfei (strain DSM 2245B / Goettingen)</name>
    <dbReference type="NCBI Taxonomy" id="335541"/>
    <lineage>
        <taxon>Bacteria</taxon>
        <taxon>Bacillati</taxon>
        <taxon>Bacillota</taxon>
        <taxon>Clostridia</taxon>
        <taxon>Eubacteriales</taxon>
        <taxon>Syntrophomonadaceae</taxon>
        <taxon>Syntrophomonas</taxon>
    </lineage>
</organism>
<protein>
    <recommendedName>
        <fullName evidence="1">GMP synthase [glutamine-hydrolyzing]</fullName>
        <ecNumber evidence="1">6.3.5.2</ecNumber>
    </recommendedName>
    <alternativeName>
        <fullName evidence="1">GMP synthetase</fullName>
    </alternativeName>
    <alternativeName>
        <fullName evidence="1">Glutamine amidotransferase</fullName>
    </alternativeName>
</protein>